<accession>P12343</accession>
<sequence length="31" mass="3427">MAPPSIFAEVPQAQPVLVFKLTADFREDPDP</sequence>
<evidence type="ECO:0000250" key="1">
    <source>
        <dbReference type="UniProtKB" id="P13221"/>
    </source>
</evidence>
<evidence type="ECO:0000250" key="2">
    <source>
        <dbReference type="UniProtKB" id="P17174"/>
    </source>
</evidence>
<evidence type="ECO:0000269" key="3">
    <source>
    </source>
</evidence>
<evidence type="ECO:0000305" key="4"/>
<feature type="initiator methionine" description="Removed" evidence="3">
    <location>
        <position position="1"/>
    </location>
</feature>
<feature type="chain" id="PRO_0000123882" description="Aspartate aminotransferase, cytoplasmic">
    <location>
        <begin position="2"/>
        <end position="31" status="greater than"/>
    </location>
</feature>
<feature type="non-terminal residue">
    <location>
        <position position="31"/>
    </location>
</feature>
<protein>
    <recommendedName>
        <fullName evidence="2">Aspartate aminotransferase, cytoplasmic</fullName>
        <shortName>cAspAT</shortName>
        <ecNumber evidence="3">2.6.1.1</ecNumber>
        <ecNumber evidence="1">2.6.1.3</ecNumber>
    </recommendedName>
    <alternativeName>
        <fullName>Cysteine aminotransferase, cytoplasmic</fullName>
    </alternativeName>
    <alternativeName>
        <fullName>Cysteine transaminase, cytoplasmic</fullName>
        <shortName>cCAT</shortName>
    </alternativeName>
    <alternativeName>
        <fullName>Glutamate oxaloacetate transaminase 1</fullName>
    </alternativeName>
    <alternativeName>
        <fullName>Transaminase A</fullName>
    </alternativeName>
</protein>
<keyword id="KW-0028">Amino-acid biosynthesis</keyword>
<keyword id="KW-0032">Aminotransferase</keyword>
<keyword id="KW-0963">Cytoplasm</keyword>
<keyword id="KW-0903">Direct protein sequencing</keyword>
<keyword id="KW-0663">Pyridoxal phosphate</keyword>
<keyword id="KW-1185">Reference proteome</keyword>
<keyword id="KW-0808">Transferase</keyword>
<comment type="function">
    <text evidence="1 3">Biosynthesis of L-glutamate from L-aspartate or L-cysteine (PubMed:4030726). Important regulator of levels of glutamate, the major excitatory neurotransmitter of the vertebrate central nervous system. Acts as a scavenger of glutamate in brain neuroprotection. The aspartate aminotransferase activity is involved in hepatic glucose synthesis during development and in adipocyte glyceroneogenesis. Using L-cysteine as substrate, regulates levels of mercaptopyruvate, an important source of hydrogen sulfide. Mercaptopyruvate is converted into H(2)S via the action of 3-mercaptopyruvate sulfurtransferase (3MST). Hydrogen sulfide is an important synaptic modulator and neuroprotectant in the brain (By similarity).</text>
</comment>
<comment type="catalytic activity">
    <reaction evidence="3">
        <text>L-aspartate + 2-oxoglutarate = oxaloacetate + L-glutamate</text>
        <dbReference type="Rhea" id="RHEA:21824"/>
        <dbReference type="ChEBI" id="CHEBI:16452"/>
        <dbReference type="ChEBI" id="CHEBI:16810"/>
        <dbReference type="ChEBI" id="CHEBI:29985"/>
        <dbReference type="ChEBI" id="CHEBI:29991"/>
        <dbReference type="EC" id="2.6.1.1"/>
    </reaction>
    <physiologicalReaction direction="left-to-right" evidence="1">
        <dbReference type="Rhea" id="RHEA:21825"/>
    </physiologicalReaction>
</comment>
<comment type="catalytic activity">
    <reaction evidence="1">
        <text>L-cysteine + 2-oxoglutarate = 2-oxo-3-sulfanylpropanoate + L-glutamate</text>
        <dbReference type="Rhea" id="RHEA:17441"/>
        <dbReference type="ChEBI" id="CHEBI:16810"/>
        <dbReference type="ChEBI" id="CHEBI:29985"/>
        <dbReference type="ChEBI" id="CHEBI:35235"/>
        <dbReference type="ChEBI" id="CHEBI:57678"/>
        <dbReference type="EC" id="2.6.1.3"/>
    </reaction>
    <physiologicalReaction direction="left-to-right" evidence="1">
        <dbReference type="Rhea" id="RHEA:17442"/>
    </physiologicalReaction>
</comment>
<comment type="catalytic activity">
    <reaction evidence="2">
        <text>(2S)-2-aminobutanoate + 2-oxoglutarate = 2-oxobutanoate + L-glutamate</text>
        <dbReference type="Rhea" id="RHEA:70223"/>
        <dbReference type="ChEBI" id="CHEBI:16763"/>
        <dbReference type="ChEBI" id="CHEBI:16810"/>
        <dbReference type="ChEBI" id="CHEBI:29985"/>
        <dbReference type="ChEBI" id="CHEBI:74359"/>
    </reaction>
    <physiologicalReaction direction="right-to-left" evidence="2">
        <dbReference type="Rhea" id="RHEA:70225"/>
    </physiologicalReaction>
</comment>
<comment type="catalytic activity">
    <reaction evidence="1">
        <text>3-sulfino-L-alanine + 2-oxoglutarate = 3-sulfinopyruvate + L-glutamate</text>
        <dbReference type="Rhea" id="RHEA:70295"/>
        <dbReference type="ChEBI" id="CHEBI:16810"/>
        <dbReference type="ChEBI" id="CHEBI:29985"/>
        <dbReference type="ChEBI" id="CHEBI:61085"/>
        <dbReference type="ChEBI" id="CHEBI:140699"/>
    </reaction>
    <physiologicalReaction direction="right-to-left" evidence="1">
        <dbReference type="Rhea" id="RHEA:70297"/>
    </physiologicalReaction>
</comment>
<comment type="cofactor">
    <cofactor>
        <name>pyridoxal 5'-phosphate</name>
        <dbReference type="ChEBI" id="CHEBI:597326"/>
    </cofactor>
</comment>
<comment type="subunit">
    <text>Homodimer.</text>
</comment>
<comment type="subcellular location">
    <subcellularLocation>
        <location>Cytoplasm</location>
    </subcellularLocation>
</comment>
<comment type="miscellaneous">
    <text>In eukaryotes there are cytoplasmic, mitochondrial and chloroplastic isozymes.</text>
</comment>
<comment type="similarity">
    <text evidence="4">Belongs to the class-I pyridoxal-phosphate-dependent aminotransferase family.</text>
</comment>
<dbReference type="EC" id="2.6.1.1" evidence="3"/>
<dbReference type="EC" id="2.6.1.3" evidence="1"/>
<dbReference type="PIR" id="A27103">
    <property type="entry name" value="A27103"/>
</dbReference>
<dbReference type="SMR" id="P12343"/>
<dbReference type="PaxDb" id="9986-ENSOCUP00000010617"/>
<dbReference type="eggNOG" id="KOG1412">
    <property type="taxonomic scope" value="Eukaryota"/>
</dbReference>
<dbReference type="InParanoid" id="P12343"/>
<dbReference type="Proteomes" id="UP000001811">
    <property type="component" value="Unplaced"/>
</dbReference>
<dbReference type="GO" id="GO:0005737">
    <property type="term" value="C:cytoplasm"/>
    <property type="evidence" value="ECO:0007669"/>
    <property type="project" value="UniProtKB-SubCell"/>
</dbReference>
<dbReference type="GO" id="GO:0004069">
    <property type="term" value="F:L-aspartate:2-oxoglutarate aminotransferase activity"/>
    <property type="evidence" value="ECO:0007669"/>
    <property type="project" value="UniProtKB-EC"/>
</dbReference>
<dbReference type="GO" id="GO:0047801">
    <property type="term" value="F:L-cysteine transaminase activity"/>
    <property type="evidence" value="ECO:0000250"/>
    <property type="project" value="UniProtKB"/>
</dbReference>
<dbReference type="GO" id="GO:0008652">
    <property type="term" value="P:amino acid biosynthetic process"/>
    <property type="evidence" value="ECO:0007669"/>
    <property type="project" value="UniProtKB-KW"/>
</dbReference>
<dbReference type="GO" id="GO:0006114">
    <property type="term" value="P:glycerol biosynthetic process"/>
    <property type="evidence" value="ECO:0000250"/>
    <property type="project" value="UniProtKB"/>
</dbReference>
<proteinExistence type="evidence at protein level"/>
<name>AATC_RABIT</name>
<reference key="1">
    <citation type="journal article" date="1985" name="J. Biochem.">
        <title>Aspartate aminotransferase isozymes from rabbit liver. Purification and properties.</title>
        <authorList>
            <person name="Kuramitsu S."/>
            <person name="Inoue K."/>
            <person name="Kondo K."/>
            <person name="Aki K."/>
            <person name="Kagamiyama H."/>
        </authorList>
    </citation>
    <scope>PROTEIN SEQUENCE OF 2-31</scope>
    <scope>FUNCTION</scope>
    <scope>CATALYTIC ACTIVITY</scope>
    <source>
        <tissue>Liver</tissue>
    </source>
</reference>
<organism>
    <name type="scientific">Oryctolagus cuniculus</name>
    <name type="common">Rabbit</name>
    <dbReference type="NCBI Taxonomy" id="9986"/>
    <lineage>
        <taxon>Eukaryota</taxon>
        <taxon>Metazoa</taxon>
        <taxon>Chordata</taxon>
        <taxon>Craniata</taxon>
        <taxon>Vertebrata</taxon>
        <taxon>Euteleostomi</taxon>
        <taxon>Mammalia</taxon>
        <taxon>Eutheria</taxon>
        <taxon>Euarchontoglires</taxon>
        <taxon>Glires</taxon>
        <taxon>Lagomorpha</taxon>
        <taxon>Leporidae</taxon>
        <taxon>Oryctolagus</taxon>
    </lineage>
</organism>
<gene>
    <name evidence="2" type="primary">GOT1</name>
</gene>